<gene>
    <name type="primary">MRGPRX2</name>
    <name type="synonym">MRGX2</name>
</gene>
<feature type="chain" id="PRO_0000069779" description="Mas-related G-protein coupled receptor member X2">
    <location>
        <begin position="1"/>
        <end position="330"/>
    </location>
</feature>
<feature type="topological domain" description="Extracellular" evidence="2">
    <location>
        <begin position="1"/>
        <end position="33"/>
    </location>
</feature>
<feature type="transmembrane region" description="Helical; Name=1" evidence="2">
    <location>
        <begin position="34"/>
        <end position="54"/>
    </location>
</feature>
<feature type="topological domain" description="Cytoplasmic" evidence="2">
    <location>
        <begin position="55"/>
        <end position="63"/>
    </location>
</feature>
<feature type="transmembrane region" description="Helical; Name=2" evidence="2">
    <location>
        <begin position="64"/>
        <end position="84"/>
    </location>
</feature>
<feature type="topological domain" description="Extracellular" evidence="2">
    <location>
        <begin position="85"/>
        <end position="96"/>
    </location>
</feature>
<feature type="transmembrane region" description="Helical; Name=3" evidence="2">
    <location>
        <begin position="97"/>
        <end position="117"/>
    </location>
</feature>
<feature type="topological domain" description="Cytoplasmic" evidence="2">
    <location>
        <begin position="118"/>
        <end position="144"/>
    </location>
</feature>
<feature type="transmembrane region" description="Helical; Name=4" evidence="2">
    <location>
        <begin position="145"/>
        <end position="165"/>
    </location>
</feature>
<feature type="topological domain" description="Extracellular" evidence="2">
    <location>
        <begin position="166"/>
        <end position="184"/>
    </location>
</feature>
<feature type="transmembrane region" description="Helical; Name=5" evidence="2">
    <location>
        <begin position="185"/>
        <end position="205"/>
    </location>
</feature>
<feature type="topological domain" description="Cytoplasmic" evidence="2">
    <location>
        <begin position="206"/>
        <end position="228"/>
    </location>
</feature>
<feature type="transmembrane region" description="Helical; Name=6" evidence="2">
    <location>
        <begin position="229"/>
        <end position="249"/>
    </location>
</feature>
<feature type="topological domain" description="Extracellular" evidence="2">
    <location>
        <begin position="250"/>
        <end position="264"/>
    </location>
</feature>
<feature type="transmembrane region" description="Helical; Name=7" evidence="2">
    <location>
        <begin position="265"/>
        <end position="285"/>
    </location>
</feature>
<feature type="topological domain" description="Cytoplasmic" evidence="2">
    <location>
        <begin position="286"/>
        <end position="330"/>
    </location>
</feature>
<keyword id="KW-1003">Cell membrane</keyword>
<keyword id="KW-0297">G-protein coupled receptor</keyword>
<keyword id="KW-0472">Membrane</keyword>
<keyword id="KW-0675">Receptor</keyword>
<keyword id="KW-0807">Transducer</keyword>
<keyword id="KW-0812">Transmembrane</keyword>
<keyword id="KW-1133">Transmembrane helix</keyword>
<name>MRGX2_PONPY</name>
<organism>
    <name type="scientific">Pongo pygmaeus</name>
    <name type="common">Bornean orangutan</name>
    <dbReference type="NCBI Taxonomy" id="9600"/>
    <lineage>
        <taxon>Eukaryota</taxon>
        <taxon>Metazoa</taxon>
        <taxon>Chordata</taxon>
        <taxon>Craniata</taxon>
        <taxon>Vertebrata</taxon>
        <taxon>Euteleostomi</taxon>
        <taxon>Mammalia</taxon>
        <taxon>Eutheria</taxon>
        <taxon>Euarchontoglires</taxon>
        <taxon>Primates</taxon>
        <taxon>Haplorrhini</taxon>
        <taxon>Catarrhini</taxon>
        <taxon>Hominidae</taxon>
        <taxon>Pongo</taxon>
    </lineage>
</organism>
<sequence>MDPTTPAWGNESTTMNGNDQALPLLCGKETLIPVFLILFIALVGLVGNGFVLWLLGFCMRRNAFSVYVLSLAGADFLFLCFQLINCLVYLSNFFCSISIDFPSFFTTVMTCAYLAGLSMLSTISTERCLSVLWPIWYRCRRPRHLSAVVCVLLWALSLLLSILEGKFCGFFFSDGDSGWCQTFDFITAAWLIFLFMVLCGSSLALLVRILCGSRGLPLTRLYLTILLTVLVFLLCGLPFGIQWFLILWIWENSDVLFCHIHPVSVVLSSLNSSANPIIYFFVGTFRKQWRLQQPILKLALQRALQDTAEVDHSEGCFRQGTPEMSRSSLV</sequence>
<accession>Q4QXU3</accession>
<comment type="function">
    <text evidence="1">Mast cell-specific receptor for basic secretagogues, i.e. cationic amphiphilic drugs, as well as endo- or exogenous peptides, consisting of a basic head group and a hydrophobic core. Recognizes and binds small molecules containing a cyclized tetrahydroisoquinoline (THIQ), such as non-steroidal neuromuscular blocking drugs (NMBDs), including tubocurarine and atracurium. In response to these compounds, mediates pseudo-allergic reactions characterized by histamine release, inflammation and airway contraction.</text>
</comment>
<comment type="subcellular location">
    <subcellularLocation>
        <location evidence="2">Cell membrane</location>
        <topology evidence="2">Multi-pass membrane protein</topology>
    </subcellularLocation>
</comment>
<comment type="similarity">
    <text evidence="3">Belongs to the G-protein coupled receptor 1 family. Mas subfamily.</text>
</comment>
<reference key="1">
    <citation type="journal article" date="2005" name="Gene">
        <title>Adaptive evolution of MRGX2, a human sensory neuron specific gene involved in nociception.</title>
        <authorList>
            <person name="Yang S."/>
            <person name="Liu Y."/>
            <person name="Lin A.A."/>
            <person name="Cavalli-Sforza L.L."/>
            <person name="Zhao Z."/>
            <person name="Su B."/>
        </authorList>
    </citation>
    <scope>NUCLEOTIDE SEQUENCE [GENOMIC DNA]</scope>
</reference>
<protein>
    <recommendedName>
        <fullName>Mas-related G-protein coupled receptor member X2</fullName>
    </recommendedName>
</protein>
<evidence type="ECO:0000250" key="1">
    <source>
        <dbReference type="UniProtKB" id="Q3KNA1"/>
    </source>
</evidence>
<evidence type="ECO:0000255" key="2"/>
<evidence type="ECO:0000255" key="3">
    <source>
        <dbReference type="PROSITE-ProRule" id="PRU00521"/>
    </source>
</evidence>
<proteinExistence type="inferred from homology"/>
<dbReference type="EMBL" id="AY651165">
    <property type="protein sequence ID" value="AAW70078.1"/>
    <property type="molecule type" value="Genomic_DNA"/>
</dbReference>
<dbReference type="RefSeq" id="XP_054295110.1">
    <property type="nucleotide sequence ID" value="XM_054439135.2"/>
</dbReference>
<dbReference type="RefSeq" id="XP_054295111.1">
    <property type="nucleotide sequence ID" value="XM_054439136.2"/>
</dbReference>
<dbReference type="RefSeq" id="XP_054295112.1">
    <property type="nucleotide sequence ID" value="XM_054439137.2"/>
</dbReference>
<dbReference type="SMR" id="Q4QXU3"/>
<dbReference type="GeneID" id="129007842"/>
<dbReference type="GO" id="GO:0005886">
    <property type="term" value="C:plasma membrane"/>
    <property type="evidence" value="ECO:0007669"/>
    <property type="project" value="UniProtKB-SubCell"/>
</dbReference>
<dbReference type="GO" id="GO:0004930">
    <property type="term" value="F:G protein-coupled receptor activity"/>
    <property type="evidence" value="ECO:0000250"/>
    <property type="project" value="UniProtKB"/>
</dbReference>
<dbReference type="GO" id="GO:1990595">
    <property type="term" value="F:mast cell secretagogue receptor activity"/>
    <property type="evidence" value="ECO:0000250"/>
    <property type="project" value="UniProtKB"/>
</dbReference>
<dbReference type="GO" id="GO:0045576">
    <property type="term" value="P:mast cell activation"/>
    <property type="evidence" value="ECO:0000250"/>
    <property type="project" value="UniProtKB"/>
</dbReference>
<dbReference type="GO" id="GO:0043303">
    <property type="term" value="P:mast cell degranulation"/>
    <property type="evidence" value="ECO:0000250"/>
    <property type="project" value="UniProtKB"/>
</dbReference>
<dbReference type="FunFam" id="1.20.1070.10:FF:000140">
    <property type="entry name" value="Mas-related G-protein coupled receptor member X2"/>
    <property type="match status" value="1"/>
</dbReference>
<dbReference type="Gene3D" id="1.20.1070.10">
    <property type="entry name" value="Rhodopsin 7-helix transmembrane proteins"/>
    <property type="match status" value="1"/>
</dbReference>
<dbReference type="InterPro" id="IPR000276">
    <property type="entry name" value="GPCR_Rhodpsn"/>
</dbReference>
<dbReference type="InterPro" id="IPR017452">
    <property type="entry name" value="GPCR_Rhodpsn_7TM"/>
</dbReference>
<dbReference type="InterPro" id="IPR026234">
    <property type="entry name" value="MRGPCRFAMILY"/>
</dbReference>
<dbReference type="PANTHER" id="PTHR11334">
    <property type="entry name" value="MAS-RELATED G-PROTEIN COUPLED RECEPTOR"/>
    <property type="match status" value="1"/>
</dbReference>
<dbReference type="PANTHER" id="PTHR11334:SF29">
    <property type="entry name" value="MAS-RELATED G-PROTEIN COUPLED RECEPTOR MEMBER X2"/>
    <property type="match status" value="1"/>
</dbReference>
<dbReference type="Pfam" id="PF00001">
    <property type="entry name" value="7tm_1"/>
    <property type="match status" value="1"/>
</dbReference>
<dbReference type="PRINTS" id="PR00237">
    <property type="entry name" value="GPCRRHODOPSN"/>
</dbReference>
<dbReference type="PRINTS" id="PR02108">
    <property type="entry name" value="MRGPCRFAMILY"/>
</dbReference>
<dbReference type="SUPFAM" id="SSF81321">
    <property type="entry name" value="Family A G protein-coupled receptor-like"/>
    <property type="match status" value="1"/>
</dbReference>
<dbReference type="PROSITE" id="PS00237">
    <property type="entry name" value="G_PROTEIN_RECEP_F1_1"/>
    <property type="match status" value="1"/>
</dbReference>
<dbReference type="PROSITE" id="PS50262">
    <property type="entry name" value="G_PROTEIN_RECEP_F1_2"/>
    <property type="match status" value="1"/>
</dbReference>